<keyword id="KW-1185">Reference proteome</keyword>
<keyword id="KW-0687">Ribonucleoprotein</keyword>
<keyword id="KW-0689">Ribosomal protein</keyword>
<sequence length="103" mass="11767">MQNQRIRIRLKAFDHRLIDQSTAEIVETAKRTGAQVRGPIPLPTRKERFTVLISPHVNKDARDQYEIRTHKRLVDIVEPTEKTVDALMRLDLAAGVDVQISLG</sequence>
<organism>
    <name type="scientific">Citrobacter koseri (strain ATCC BAA-895 / CDC 4225-83 / SGSC4696)</name>
    <dbReference type="NCBI Taxonomy" id="290338"/>
    <lineage>
        <taxon>Bacteria</taxon>
        <taxon>Pseudomonadati</taxon>
        <taxon>Pseudomonadota</taxon>
        <taxon>Gammaproteobacteria</taxon>
        <taxon>Enterobacterales</taxon>
        <taxon>Enterobacteriaceae</taxon>
        <taxon>Citrobacter</taxon>
    </lineage>
</organism>
<reference key="1">
    <citation type="submission" date="2007-08" db="EMBL/GenBank/DDBJ databases">
        <authorList>
            <consortium name="The Citrobacter koseri Genome Sequencing Project"/>
            <person name="McClelland M."/>
            <person name="Sanderson E.K."/>
            <person name="Porwollik S."/>
            <person name="Spieth J."/>
            <person name="Clifton W.S."/>
            <person name="Latreille P."/>
            <person name="Courtney L."/>
            <person name="Wang C."/>
            <person name="Pepin K."/>
            <person name="Bhonagiri V."/>
            <person name="Nash W."/>
            <person name="Johnson M."/>
            <person name="Thiruvilangam P."/>
            <person name="Wilson R."/>
        </authorList>
    </citation>
    <scope>NUCLEOTIDE SEQUENCE [LARGE SCALE GENOMIC DNA]</scope>
    <source>
        <strain>ATCC BAA-895 / CDC 4225-83 / SGSC4696</strain>
    </source>
</reference>
<protein>
    <recommendedName>
        <fullName evidence="1">Small ribosomal subunit protein uS10</fullName>
    </recommendedName>
    <alternativeName>
        <fullName evidence="2">30S ribosomal protein S10</fullName>
    </alternativeName>
</protein>
<evidence type="ECO:0000255" key="1">
    <source>
        <dbReference type="HAMAP-Rule" id="MF_00508"/>
    </source>
</evidence>
<evidence type="ECO:0000305" key="2"/>
<feature type="chain" id="PRO_1000015009" description="Small ribosomal subunit protein uS10">
    <location>
        <begin position="1"/>
        <end position="103"/>
    </location>
</feature>
<dbReference type="EMBL" id="CP000822">
    <property type="protein sequence ID" value="ABV15784.1"/>
    <property type="molecule type" value="Genomic_DNA"/>
</dbReference>
<dbReference type="RefSeq" id="WP_001181005.1">
    <property type="nucleotide sequence ID" value="NC_009792.1"/>
</dbReference>
<dbReference type="SMR" id="A8AQM1"/>
<dbReference type="STRING" id="290338.CKO_04739"/>
<dbReference type="GeneID" id="98390443"/>
<dbReference type="KEGG" id="cko:CKO_04739"/>
<dbReference type="HOGENOM" id="CLU_122625_1_3_6"/>
<dbReference type="OrthoDB" id="9804464at2"/>
<dbReference type="Proteomes" id="UP000008148">
    <property type="component" value="Chromosome"/>
</dbReference>
<dbReference type="GO" id="GO:1990904">
    <property type="term" value="C:ribonucleoprotein complex"/>
    <property type="evidence" value="ECO:0007669"/>
    <property type="project" value="UniProtKB-KW"/>
</dbReference>
<dbReference type="GO" id="GO:0005840">
    <property type="term" value="C:ribosome"/>
    <property type="evidence" value="ECO:0007669"/>
    <property type="project" value="UniProtKB-KW"/>
</dbReference>
<dbReference type="GO" id="GO:0003735">
    <property type="term" value="F:structural constituent of ribosome"/>
    <property type="evidence" value="ECO:0007669"/>
    <property type="project" value="InterPro"/>
</dbReference>
<dbReference type="GO" id="GO:0000049">
    <property type="term" value="F:tRNA binding"/>
    <property type="evidence" value="ECO:0007669"/>
    <property type="project" value="UniProtKB-UniRule"/>
</dbReference>
<dbReference type="GO" id="GO:0006412">
    <property type="term" value="P:translation"/>
    <property type="evidence" value="ECO:0007669"/>
    <property type="project" value="UniProtKB-UniRule"/>
</dbReference>
<dbReference type="FunFam" id="3.30.70.600:FF:000001">
    <property type="entry name" value="30S ribosomal protein S10"/>
    <property type="match status" value="1"/>
</dbReference>
<dbReference type="Gene3D" id="3.30.70.600">
    <property type="entry name" value="Ribosomal protein S10 domain"/>
    <property type="match status" value="1"/>
</dbReference>
<dbReference type="HAMAP" id="MF_00508">
    <property type="entry name" value="Ribosomal_uS10"/>
    <property type="match status" value="1"/>
</dbReference>
<dbReference type="InterPro" id="IPR001848">
    <property type="entry name" value="Ribosomal_uS10"/>
</dbReference>
<dbReference type="InterPro" id="IPR018268">
    <property type="entry name" value="Ribosomal_uS10_CS"/>
</dbReference>
<dbReference type="InterPro" id="IPR027486">
    <property type="entry name" value="Ribosomal_uS10_dom"/>
</dbReference>
<dbReference type="InterPro" id="IPR036838">
    <property type="entry name" value="Ribosomal_uS10_dom_sf"/>
</dbReference>
<dbReference type="NCBIfam" id="NF001861">
    <property type="entry name" value="PRK00596.1"/>
    <property type="match status" value="1"/>
</dbReference>
<dbReference type="NCBIfam" id="TIGR01049">
    <property type="entry name" value="rpsJ_bact"/>
    <property type="match status" value="1"/>
</dbReference>
<dbReference type="PANTHER" id="PTHR11700">
    <property type="entry name" value="30S RIBOSOMAL PROTEIN S10 FAMILY MEMBER"/>
    <property type="match status" value="1"/>
</dbReference>
<dbReference type="Pfam" id="PF00338">
    <property type="entry name" value="Ribosomal_S10"/>
    <property type="match status" value="1"/>
</dbReference>
<dbReference type="PRINTS" id="PR00971">
    <property type="entry name" value="RIBOSOMALS10"/>
</dbReference>
<dbReference type="SMART" id="SM01403">
    <property type="entry name" value="Ribosomal_S10"/>
    <property type="match status" value="1"/>
</dbReference>
<dbReference type="SUPFAM" id="SSF54999">
    <property type="entry name" value="Ribosomal protein S10"/>
    <property type="match status" value="1"/>
</dbReference>
<dbReference type="PROSITE" id="PS00361">
    <property type="entry name" value="RIBOSOMAL_S10"/>
    <property type="match status" value="1"/>
</dbReference>
<gene>
    <name evidence="1" type="primary">rpsJ</name>
    <name type="ordered locus">CKO_04739</name>
</gene>
<accession>A8AQM1</accession>
<name>RS10_CITK8</name>
<comment type="function">
    <text evidence="1">Involved in the binding of tRNA to the ribosomes.</text>
</comment>
<comment type="subunit">
    <text evidence="1">Part of the 30S ribosomal subunit.</text>
</comment>
<comment type="similarity">
    <text evidence="1">Belongs to the universal ribosomal protein uS10 family.</text>
</comment>
<proteinExistence type="inferred from homology"/>